<sequence>MAATAAALAVTDELALPLRAVGDLAAAAGVSREEVVVITQCASLGGKLPFDDASVGSVLAVIKKVENLGDLFITEISRVLKAGGMVLIQSSPSDQDPNNSIQRKLLLGGFVDVQASAASSQDSEHSVTIKAKKVSWSMGSSFPLKKATKGLPKIQIDDDSELIDEDSLLTEDDLKKPELPVVGDCEVGATRKACKNCTCGRAEAEEKVEKLNLTSEQINNPQSACGNCGLGDAFRCGTCPYRGLPAFKPGEKIALPGNFLAADL</sequence>
<proteinExistence type="evidence at transcript level"/>
<comment type="function">
    <text evidence="1">Component of the cytosolic iron-sulfur (Fe-S) protein assembly (CIA) machinery. Required for the maturation of extramitochondrial Fe-S proteins. Part of an electron transfer chain functioning in an early step of cytosolic Fe-S biogenesis, facilitating the de novo assembly of a [4Fe-4S] cluster on the cytosolic Fe-S scaffold complex. Electrons are transferred from NADPH via a FAD- and FMN-containing diflavin oxidoreductase. Together with the diflavin oxidoreductase, also required for the assembly of the diferric tyrosyl radical cofactor of ribonucleotide reductase (RNR), probably by providing electrons for reduction during radical cofactor maturation in the catalytic small subunit.</text>
</comment>
<comment type="cofactor">
    <cofactor evidence="1">
        <name>[2Fe-2S] cluster</name>
        <dbReference type="ChEBI" id="CHEBI:190135"/>
    </cofactor>
</comment>
<comment type="cofactor">
    <cofactor evidence="1">
        <name>[4Fe-4S] cluster</name>
        <dbReference type="ChEBI" id="CHEBI:49883"/>
    </cofactor>
</comment>
<comment type="subunit">
    <text evidence="1">Monomer.</text>
</comment>
<comment type="subcellular location">
    <subcellularLocation>
        <location evidence="1">Cytoplasm</location>
    </subcellularLocation>
    <subcellularLocation>
        <location evidence="1">Mitochondrion intermembrane space</location>
    </subcellularLocation>
</comment>
<comment type="domain">
    <text evidence="1">The C-terminal domain binds 2 Fe-S clusters but is otherwise mostly in an intrinsically disordered conformation.</text>
</comment>
<comment type="domain">
    <text evidence="1">The N-terminal domain has structural similarity with S-adenosyl-L-methionine-dependent methyltransferases, but does not bind S-adenosyl-L-methionine. It is required for correct assembly of the 2 Fe-S clusters.</text>
</comment>
<comment type="domain">
    <text evidence="1">The twin Cx2C motifs are involved in the recognition by the mitochondrial MIA40-ERV1 disulfide relay system. The formation of 2 disulfide bonds in the Cx2C motifs through dithiol/disulfide exchange reactions effectively traps the protein in the mitochondrial intermembrane space.</text>
</comment>
<comment type="similarity">
    <text evidence="1">Belongs to the anamorsin family.</text>
</comment>
<evidence type="ECO:0000255" key="1">
    <source>
        <dbReference type="HAMAP-Rule" id="MF_03115"/>
    </source>
</evidence>
<keyword id="KW-0001">2Fe-2S</keyword>
<keyword id="KW-0004">4Fe-4S</keyword>
<keyword id="KW-0963">Cytoplasm</keyword>
<keyword id="KW-0408">Iron</keyword>
<keyword id="KW-0411">Iron-sulfur</keyword>
<keyword id="KW-0479">Metal-binding</keyword>
<keyword id="KW-0496">Mitochondrion</keyword>
<keyword id="KW-1185">Reference proteome</keyword>
<organism>
    <name type="scientific">Oryza sativa subsp. indica</name>
    <name type="common">Rice</name>
    <dbReference type="NCBI Taxonomy" id="39946"/>
    <lineage>
        <taxon>Eukaryota</taxon>
        <taxon>Viridiplantae</taxon>
        <taxon>Streptophyta</taxon>
        <taxon>Embryophyta</taxon>
        <taxon>Tracheophyta</taxon>
        <taxon>Spermatophyta</taxon>
        <taxon>Magnoliopsida</taxon>
        <taxon>Liliopsida</taxon>
        <taxon>Poales</taxon>
        <taxon>Poaceae</taxon>
        <taxon>BOP clade</taxon>
        <taxon>Oryzoideae</taxon>
        <taxon>Oryzeae</taxon>
        <taxon>Oryzinae</taxon>
        <taxon>Oryza</taxon>
        <taxon>Oryza sativa</taxon>
    </lineage>
</organism>
<feature type="chain" id="PRO_0000392337" description="Anamorsin homolog 2">
    <location>
        <begin position="1"/>
        <end position="264"/>
    </location>
</feature>
<feature type="region of interest" description="N-terminal SAM-like domain" evidence="1">
    <location>
        <begin position="1"/>
        <end position="142"/>
    </location>
</feature>
<feature type="region of interest" description="Linker" evidence="1">
    <location>
        <begin position="143"/>
        <end position="174"/>
    </location>
</feature>
<feature type="region of interest" description="Fe-S binding site A" evidence="1">
    <location>
        <begin position="185"/>
        <end position="199"/>
    </location>
</feature>
<feature type="region of interest" description="Fe-S binding site B" evidence="1">
    <location>
        <begin position="225"/>
        <end position="239"/>
    </location>
</feature>
<feature type="short sequence motif" description="Cx2C motif 1" evidence="1">
    <location>
        <begin position="225"/>
        <end position="228"/>
    </location>
</feature>
<feature type="short sequence motif" description="Cx2C motif 2" evidence="1">
    <location>
        <begin position="236"/>
        <end position="239"/>
    </location>
</feature>
<feature type="binding site" evidence="1">
    <location>
        <position position="185"/>
    </location>
    <ligand>
        <name>[2Fe-2S] cluster</name>
        <dbReference type="ChEBI" id="CHEBI:190135"/>
    </ligand>
</feature>
<feature type="binding site" evidence="1">
    <location>
        <position position="194"/>
    </location>
    <ligand>
        <name>[2Fe-2S] cluster</name>
        <dbReference type="ChEBI" id="CHEBI:190135"/>
    </ligand>
</feature>
<feature type="binding site" evidence="1">
    <location>
        <position position="197"/>
    </location>
    <ligand>
        <name>[2Fe-2S] cluster</name>
        <dbReference type="ChEBI" id="CHEBI:190135"/>
    </ligand>
</feature>
<feature type="binding site" evidence="1">
    <location>
        <position position="199"/>
    </location>
    <ligand>
        <name>[2Fe-2S] cluster</name>
        <dbReference type="ChEBI" id="CHEBI:190135"/>
    </ligand>
</feature>
<feature type="binding site" evidence="1">
    <location>
        <position position="225"/>
    </location>
    <ligand>
        <name>[4Fe-4S] cluster</name>
        <dbReference type="ChEBI" id="CHEBI:49883"/>
    </ligand>
</feature>
<feature type="binding site" evidence="1">
    <location>
        <position position="228"/>
    </location>
    <ligand>
        <name>[4Fe-4S] cluster</name>
        <dbReference type="ChEBI" id="CHEBI:49883"/>
    </ligand>
</feature>
<feature type="binding site" evidence="1">
    <location>
        <position position="236"/>
    </location>
    <ligand>
        <name>[4Fe-4S] cluster</name>
        <dbReference type="ChEBI" id="CHEBI:49883"/>
    </ligand>
</feature>
<feature type="binding site" evidence="1">
    <location>
        <position position="239"/>
    </location>
    <ligand>
        <name>[4Fe-4S] cluster</name>
        <dbReference type="ChEBI" id="CHEBI:49883"/>
    </ligand>
</feature>
<name>DRE22_ORYSI</name>
<accession>B8ARI7</accession>
<dbReference type="EMBL" id="CM000129">
    <property type="protein sequence ID" value="EEC78269.1"/>
    <property type="molecule type" value="Genomic_DNA"/>
</dbReference>
<dbReference type="SMR" id="B8ARI7"/>
<dbReference type="STRING" id="39946.B8ARI7"/>
<dbReference type="EnsemblPlants" id="BGIOSGA014070-TA">
    <property type="protein sequence ID" value="BGIOSGA014070-PA"/>
    <property type="gene ID" value="BGIOSGA014070"/>
</dbReference>
<dbReference type="EnsemblPlants" id="OsIR64_04g0030510.01">
    <property type="protein sequence ID" value="OsIR64_04g0030510.01"/>
    <property type="gene ID" value="OsIR64_04g0030510"/>
</dbReference>
<dbReference type="EnsemblPlants" id="OsIR64_04g0030510.02">
    <property type="protein sequence ID" value="OsIR64_04g0030510.02"/>
    <property type="gene ID" value="OsIR64_04g0030510"/>
</dbReference>
<dbReference type="EnsemblPlants" id="OsKYG_04g0030780.01">
    <property type="protein sequence ID" value="OsKYG_04g0030780.01"/>
    <property type="gene ID" value="OsKYG_04g0030780"/>
</dbReference>
<dbReference type="EnsemblPlants" id="OsKYG_04g0030780.03">
    <property type="protein sequence ID" value="OsKYG_04g0030780.03"/>
    <property type="gene ID" value="OsKYG_04g0030780"/>
</dbReference>
<dbReference type="EnsemblPlants" id="OsLaMu_04g0031490.01">
    <property type="protein sequence ID" value="OsLaMu_04g0031490.01"/>
    <property type="gene ID" value="OsLaMu_04g0031490"/>
</dbReference>
<dbReference type="EnsemblPlants" id="OsLaMu_04g0031490.02">
    <property type="protein sequence ID" value="OsLaMu_04g0031490.02"/>
    <property type="gene ID" value="OsLaMu_04g0031490"/>
</dbReference>
<dbReference type="EnsemblPlants" id="OsLima_04g0030990.02">
    <property type="protein sequence ID" value="OsLima_04g0030990.02"/>
    <property type="gene ID" value="OsLima_04g0030990"/>
</dbReference>
<dbReference type="EnsemblPlants" id="OsLima_04g0030990.03">
    <property type="protein sequence ID" value="OsLima_04g0030990.03"/>
    <property type="gene ID" value="OsLima_04g0030990"/>
</dbReference>
<dbReference type="EnsemblPlants" id="OsLiXu_04g0031480.01">
    <property type="protein sequence ID" value="OsLiXu_04g0031480.01"/>
    <property type="gene ID" value="OsLiXu_04g0031480"/>
</dbReference>
<dbReference type="EnsemblPlants" id="OsLiXu_04g0031480.03">
    <property type="protein sequence ID" value="OsLiXu_04g0031480.03"/>
    <property type="gene ID" value="OsLiXu_04g0031480"/>
</dbReference>
<dbReference type="EnsemblPlants" id="OsPr106_04g0031880.02">
    <property type="protein sequence ID" value="OsPr106_04g0031880.02"/>
    <property type="gene ID" value="OsPr106_04g0031880"/>
</dbReference>
<dbReference type="EnsemblPlants" id="OsPr106_04g0031880.03">
    <property type="protein sequence ID" value="OsPr106_04g0031880.03"/>
    <property type="gene ID" value="OsPr106_04g0031880"/>
</dbReference>
<dbReference type="Gramene" id="BGIOSGA014070-TA">
    <property type="protein sequence ID" value="BGIOSGA014070-PA"/>
    <property type="gene ID" value="BGIOSGA014070"/>
</dbReference>
<dbReference type="Gramene" id="OsIR64_04g0030510.01">
    <property type="protein sequence ID" value="OsIR64_04g0030510.01"/>
    <property type="gene ID" value="OsIR64_04g0030510"/>
</dbReference>
<dbReference type="Gramene" id="OsIR64_04g0030510.02">
    <property type="protein sequence ID" value="OsIR64_04g0030510.02"/>
    <property type="gene ID" value="OsIR64_04g0030510"/>
</dbReference>
<dbReference type="Gramene" id="OsKYG_04g0030780.01">
    <property type="protein sequence ID" value="OsKYG_04g0030780.01"/>
    <property type="gene ID" value="OsKYG_04g0030780"/>
</dbReference>
<dbReference type="Gramene" id="OsKYG_04g0030780.03">
    <property type="protein sequence ID" value="OsKYG_04g0030780.03"/>
    <property type="gene ID" value="OsKYG_04g0030780"/>
</dbReference>
<dbReference type="Gramene" id="OsLaMu_04g0031490.01">
    <property type="protein sequence ID" value="OsLaMu_04g0031490.01"/>
    <property type="gene ID" value="OsLaMu_04g0031490"/>
</dbReference>
<dbReference type="Gramene" id="OsLaMu_04g0031490.02">
    <property type="protein sequence ID" value="OsLaMu_04g0031490.02"/>
    <property type="gene ID" value="OsLaMu_04g0031490"/>
</dbReference>
<dbReference type="Gramene" id="OsLima_04g0030990.02">
    <property type="protein sequence ID" value="OsLima_04g0030990.02"/>
    <property type="gene ID" value="OsLima_04g0030990"/>
</dbReference>
<dbReference type="Gramene" id="OsLima_04g0030990.03">
    <property type="protein sequence ID" value="OsLima_04g0030990.03"/>
    <property type="gene ID" value="OsLima_04g0030990"/>
</dbReference>
<dbReference type="Gramene" id="OsLiXu_04g0031480.01">
    <property type="protein sequence ID" value="OsLiXu_04g0031480.01"/>
    <property type="gene ID" value="OsLiXu_04g0031480"/>
</dbReference>
<dbReference type="Gramene" id="OsLiXu_04g0031480.03">
    <property type="protein sequence ID" value="OsLiXu_04g0031480.03"/>
    <property type="gene ID" value="OsLiXu_04g0031480"/>
</dbReference>
<dbReference type="Gramene" id="OsPr106_04g0031880.02">
    <property type="protein sequence ID" value="OsPr106_04g0031880.02"/>
    <property type="gene ID" value="OsPr106_04g0031880"/>
</dbReference>
<dbReference type="Gramene" id="OsPr106_04g0031880.03">
    <property type="protein sequence ID" value="OsPr106_04g0031880.03"/>
    <property type="gene ID" value="OsPr106_04g0031880"/>
</dbReference>
<dbReference type="HOGENOM" id="CLU_064393_0_0_1"/>
<dbReference type="OMA" id="PNVGDCE"/>
<dbReference type="Proteomes" id="UP000007015">
    <property type="component" value="Chromosome 4"/>
</dbReference>
<dbReference type="GO" id="GO:0005758">
    <property type="term" value="C:mitochondrial intermembrane space"/>
    <property type="evidence" value="ECO:0007669"/>
    <property type="project" value="UniProtKB-SubCell"/>
</dbReference>
<dbReference type="GO" id="GO:0051537">
    <property type="term" value="F:2 iron, 2 sulfur cluster binding"/>
    <property type="evidence" value="ECO:0007669"/>
    <property type="project" value="UniProtKB-UniRule"/>
</dbReference>
<dbReference type="GO" id="GO:0051539">
    <property type="term" value="F:4 iron, 4 sulfur cluster binding"/>
    <property type="evidence" value="ECO:0007669"/>
    <property type="project" value="UniProtKB-KW"/>
</dbReference>
<dbReference type="GO" id="GO:0009055">
    <property type="term" value="F:electron transfer activity"/>
    <property type="evidence" value="ECO:0007669"/>
    <property type="project" value="UniProtKB-UniRule"/>
</dbReference>
<dbReference type="GO" id="GO:0046872">
    <property type="term" value="F:metal ion binding"/>
    <property type="evidence" value="ECO:0007669"/>
    <property type="project" value="UniProtKB-KW"/>
</dbReference>
<dbReference type="GO" id="GO:0016226">
    <property type="term" value="P:iron-sulfur cluster assembly"/>
    <property type="evidence" value="ECO:0007669"/>
    <property type="project" value="UniProtKB-UniRule"/>
</dbReference>
<dbReference type="FunFam" id="3.40.50.150:FF:000178">
    <property type="entry name" value="Anamorsin homolog"/>
    <property type="match status" value="1"/>
</dbReference>
<dbReference type="Gene3D" id="3.40.50.150">
    <property type="entry name" value="Vaccinia Virus protein VP39"/>
    <property type="match status" value="1"/>
</dbReference>
<dbReference type="HAMAP" id="MF_03115">
    <property type="entry name" value="Anamorsin"/>
    <property type="match status" value="1"/>
</dbReference>
<dbReference type="InterPro" id="IPR007785">
    <property type="entry name" value="Anamorsin"/>
</dbReference>
<dbReference type="InterPro" id="IPR046408">
    <property type="entry name" value="CIAPIN1"/>
</dbReference>
<dbReference type="InterPro" id="IPR029063">
    <property type="entry name" value="SAM-dependent_MTases_sf"/>
</dbReference>
<dbReference type="PANTHER" id="PTHR13273">
    <property type="entry name" value="ANAMORSIN"/>
    <property type="match status" value="1"/>
</dbReference>
<dbReference type="PANTHER" id="PTHR13273:SF14">
    <property type="entry name" value="ANAMORSIN"/>
    <property type="match status" value="1"/>
</dbReference>
<dbReference type="Pfam" id="PF05093">
    <property type="entry name" value="CIAPIN1"/>
    <property type="match status" value="1"/>
</dbReference>
<protein>
    <recommendedName>
        <fullName evidence="1">Anamorsin homolog 2</fullName>
    </recommendedName>
    <alternativeName>
        <fullName evidence="1">Fe-S cluster assembly protein DRE2 homolog 2</fullName>
    </alternativeName>
</protein>
<gene>
    <name type="ORF">OsI_17963</name>
</gene>
<reference key="1">
    <citation type="journal article" date="2005" name="PLoS Biol.">
        <title>The genomes of Oryza sativa: a history of duplications.</title>
        <authorList>
            <person name="Yu J."/>
            <person name="Wang J."/>
            <person name="Lin W."/>
            <person name="Li S."/>
            <person name="Li H."/>
            <person name="Zhou J."/>
            <person name="Ni P."/>
            <person name="Dong W."/>
            <person name="Hu S."/>
            <person name="Zeng C."/>
            <person name="Zhang J."/>
            <person name="Zhang Y."/>
            <person name="Li R."/>
            <person name="Xu Z."/>
            <person name="Li S."/>
            <person name="Li X."/>
            <person name="Zheng H."/>
            <person name="Cong L."/>
            <person name="Lin L."/>
            <person name="Yin J."/>
            <person name="Geng J."/>
            <person name="Li G."/>
            <person name="Shi J."/>
            <person name="Liu J."/>
            <person name="Lv H."/>
            <person name="Li J."/>
            <person name="Wang J."/>
            <person name="Deng Y."/>
            <person name="Ran L."/>
            <person name="Shi X."/>
            <person name="Wang X."/>
            <person name="Wu Q."/>
            <person name="Li C."/>
            <person name="Ren X."/>
            <person name="Wang J."/>
            <person name="Wang X."/>
            <person name="Li D."/>
            <person name="Liu D."/>
            <person name="Zhang X."/>
            <person name="Ji Z."/>
            <person name="Zhao W."/>
            <person name="Sun Y."/>
            <person name="Zhang Z."/>
            <person name="Bao J."/>
            <person name="Han Y."/>
            <person name="Dong L."/>
            <person name="Ji J."/>
            <person name="Chen P."/>
            <person name="Wu S."/>
            <person name="Liu J."/>
            <person name="Xiao Y."/>
            <person name="Bu D."/>
            <person name="Tan J."/>
            <person name="Yang L."/>
            <person name="Ye C."/>
            <person name="Zhang J."/>
            <person name="Xu J."/>
            <person name="Zhou Y."/>
            <person name="Yu Y."/>
            <person name="Zhang B."/>
            <person name="Zhuang S."/>
            <person name="Wei H."/>
            <person name="Liu B."/>
            <person name="Lei M."/>
            <person name="Yu H."/>
            <person name="Li Y."/>
            <person name="Xu H."/>
            <person name="Wei S."/>
            <person name="He X."/>
            <person name="Fang L."/>
            <person name="Zhang Z."/>
            <person name="Zhang Y."/>
            <person name="Huang X."/>
            <person name="Su Z."/>
            <person name="Tong W."/>
            <person name="Li J."/>
            <person name="Tong Z."/>
            <person name="Li S."/>
            <person name="Ye J."/>
            <person name="Wang L."/>
            <person name="Fang L."/>
            <person name="Lei T."/>
            <person name="Chen C.-S."/>
            <person name="Chen H.-C."/>
            <person name="Xu Z."/>
            <person name="Li H."/>
            <person name="Huang H."/>
            <person name="Zhang F."/>
            <person name="Xu H."/>
            <person name="Li N."/>
            <person name="Zhao C."/>
            <person name="Li S."/>
            <person name="Dong L."/>
            <person name="Huang Y."/>
            <person name="Li L."/>
            <person name="Xi Y."/>
            <person name="Qi Q."/>
            <person name="Li W."/>
            <person name="Zhang B."/>
            <person name="Hu W."/>
            <person name="Zhang Y."/>
            <person name="Tian X."/>
            <person name="Jiao Y."/>
            <person name="Liang X."/>
            <person name="Jin J."/>
            <person name="Gao L."/>
            <person name="Zheng W."/>
            <person name="Hao B."/>
            <person name="Liu S.-M."/>
            <person name="Wang W."/>
            <person name="Yuan L."/>
            <person name="Cao M."/>
            <person name="McDermott J."/>
            <person name="Samudrala R."/>
            <person name="Wang J."/>
            <person name="Wong G.K.-S."/>
            <person name="Yang H."/>
        </authorList>
    </citation>
    <scope>NUCLEOTIDE SEQUENCE [LARGE SCALE GENOMIC DNA]</scope>
    <source>
        <strain>cv. 93-11</strain>
    </source>
</reference>